<dbReference type="EMBL" id="DS028131">
    <property type="protein sequence ID" value="EEY55375.1"/>
    <property type="molecule type" value="Genomic_DNA"/>
</dbReference>
<dbReference type="RefSeq" id="XP_002903599.1">
    <property type="nucleotide sequence ID" value="XM_002903553.1"/>
</dbReference>
<dbReference type="PDB" id="5L7S">
    <property type="method" value="X-ray"/>
    <property type="resolution" value="2.90 A"/>
    <property type="chains" value="A=92-381"/>
</dbReference>
<dbReference type="PDBsum" id="5L7S"/>
<dbReference type="SMR" id="D0NBE6"/>
<dbReference type="STRING" id="403677.D0NBE6"/>
<dbReference type="EnsemblProtists" id="PITG_09316T0">
    <property type="protein sequence ID" value="PITG_09316T0"/>
    <property type="gene ID" value="PITG_09316"/>
</dbReference>
<dbReference type="GeneID" id="9461793"/>
<dbReference type="KEGG" id="pif:PITG_09316"/>
<dbReference type="VEuPathDB" id="FungiDB:PITG_09316"/>
<dbReference type="eggNOG" id="ENOG502T0RF">
    <property type="taxonomic scope" value="Eukaryota"/>
</dbReference>
<dbReference type="HOGENOM" id="CLU_044421_1_0_1"/>
<dbReference type="InParanoid" id="D0NBE6"/>
<dbReference type="OMA" id="ERVGPSW"/>
<dbReference type="OrthoDB" id="109324at2759"/>
<dbReference type="Proteomes" id="UP000006643">
    <property type="component" value="Partially assembled WGS sequence"/>
</dbReference>
<dbReference type="GO" id="GO:0005576">
    <property type="term" value="C:extracellular region"/>
    <property type="evidence" value="ECO:0007669"/>
    <property type="project" value="UniProtKB-SubCell"/>
</dbReference>
<dbReference type="GO" id="GO:0030430">
    <property type="term" value="C:host cell cytoplasm"/>
    <property type="evidence" value="ECO:0007669"/>
    <property type="project" value="UniProtKB-SubCell"/>
</dbReference>
<dbReference type="GO" id="GO:0042025">
    <property type="term" value="C:host cell nucleus"/>
    <property type="evidence" value="ECO:0007669"/>
    <property type="project" value="UniProtKB-SubCell"/>
</dbReference>
<dbReference type="InterPro" id="IPR054463">
    <property type="entry name" value="PexRD54_WY"/>
</dbReference>
<dbReference type="InterPro" id="IPR040786">
    <property type="entry name" value="RXLR_WY"/>
</dbReference>
<dbReference type="Pfam" id="PF22748">
    <property type="entry name" value="PexRD54_WY"/>
    <property type="match status" value="3"/>
</dbReference>
<dbReference type="Pfam" id="PF18634">
    <property type="entry name" value="RXLR_WY"/>
    <property type="match status" value="2"/>
</dbReference>
<evidence type="ECO:0000255" key="1"/>
<evidence type="ECO:0000269" key="2">
    <source>
    </source>
</evidence>
<evidence type="ECO:0000269" key="3">
    <source>
    </source>
</evidence>
<evidence type="ECO:0000269" key="4">
    <source>
    </source>
</evidence>
<evidence type="ECO:0000269" key="5">
    <source>
    </source>
</evidence>
<evidence type="ECO:0000269" key="6">
    <source>
    </source>
</evidence>
<evidence type="ECO:0000303" key="7">
    <source>
    </source>
</evidence>
<evidence type="ECO:0000305" key="8"/>
<evidence type="ECO:0000305" key="9">
    <source>
    </source>
</evidence>
<evidence type="ECO:0000305" key="10">
    <source>
    </source>
</evidence>
<evidence type="ECO:0007829" key="11">
    <source>
        <dbReference type="PDB" id="5L7S"/>
    </source>
</evidence>
<proteinExistence type="evidence at protein level"/>
<protein>
    <recommendedName>
        <fullName evidence="7">RxLR effector protein 54</fullName>
    </recommendedName>
</protein>
<gene>
    <name evidence="7" type="primary">PexRD54</name>
    <name type="ORF">PITG_09316</name>
</gene>
<reference key="1">
    <citation type="journal article" date="2009" name="Nature">
        <title>Genome sequence and analysis of the Irish potato famine pathogen Phytophthora infestans.</title>
        <authorList>
            <consortium name="The Broad Institute Genome Sequencing Platform"/>
            <person name="Haas B.J."/>
            <person name="Kamoun S."/>
            <person name="Zody M.C."/>
            <person name="Jiang R.H."/>
            <person name="Handsaker R.E."/>
            <person name="Cano L.M."/>
            <person name="Grabherr M."/>
            <person name="Kodira C.D."/>
            <person name="Raffaele S."/>
            <person name="Torto-Alalibo T."/>
            <person name="Bozkurt T.O."/>
            <person name="Ah-Fong A.M."/>
            <person name="Alvarado L."/>
            <person name="Anderson V.L."/>
            <person name="Armstrong M.R."/>
            <person name="Avrova A."/>
            <person name="Baxter L."/>
            <person name="Beynon J."/>
            <person name="Boevink P.C."/>
            <person name="Bollmann S.R."/>
            <person name="Bos J.I."/>
            <person name="Bulone V."/>
            <person name="Cai G."/>
            <person name="Cakir C."/>
            <person name="Carrington J.C."/>
            <person name="Chawner M."/>
            <person name="Conti L."/>
            <person name="Costanzo S."/>
            <person name="Ewan R."/>
            <person name="Fahlgren N."/>
            <person name="Fischbach M.A."/>
            <person name="Fugelstad J."/>
            <person name="Gilroy E.M."/>
            <person name="Gnerre S."/>
            <person name="Green P.J."/>
            <person name="Grenville-Briggs L.J."/>
            <person name="Griffith J."/>
            <person name="Grunwald N.J."/>
            <person name="Horn K."/>
            <person name="Horner N.R."/>
            <person name="Hu C.H."/>
            <person name="Huitema E."/>
            <person name="Jeong D.H."/>
            <person name="Jones A.M."/>
            <person name="Jones J.D."/>
            <person name="Jones R.W."/>
            <person name="Karlsson E.K."/>
            <person name="Kunjeti S.G."/>
            <person name="Lamour K."/>
            <person name="Liu Z."/>
            <person name="Ma L."/>
            <person name="Maclean D."/>
            <person name="Chibucos M.C."/>
            <person name="McDonald H."/>
            <person name="McWalters J."/>
            <person name="Meijer H.J."/>
            <person name="Morgan W."/>
            <person name="Morris P.F."/>
            <person name="Munro C.A."/>
            <person name="O'Neill K."/>
            <person name="Ospina-Giraldo M."/>
            <person name="Pinzon A."/>
            <person name="Pritchard L."/>
            <person name="Ramsahoye B."/>
            <person name="Ren Q."/>
            <person name="Restrepo S."/>
            <person name="Roy S."/>
            <person name="Sadanandom A."/>
            <person name="Savidor A."/>
            <person name="Schornack S."/>
            <person name="Schwartz D.C."/>
            <person name="Schumann U.D."/>
            <person name="Schwessinger B."/>
            <person name="Seyer L."/>
            <person name="Sharpe T."/>
            <person name="Silvar C."/>
            <person name="Song J."/>
            <person name="Studholme D.J."/>
            <person name="Sykes S."/>
            <person name="Thines M."/>
            <person name="van de Vondervoort P.J."/>
            <person name="Phuntumart V."/>
            <person name="Wawra S."/>
            <person name="Weide R."/>
            <person name="Win J."/>
            <person name="Young C."/>
            <person name="Zhou S."/>
            <person name="Fry W."/>
            <person name="Meyers B.C."/>
            <person name="van West P."/>
            <person name="Ristaino J."/>
            <person name="Govers F."/>
            <person name="Birch P.R."/>
            <person name="Whisson S.C."/>
            <person name="Judelson H.S."/>
            <person name="Nusbaum C."/>
        </authorList>
    </citation>
    <scope>NUCLEOTIDE SEQUENCE [LARGE SCALE GENOMIC DNA]</scope>
    <source>
        <strain>T30-4</strain>
    </source>
</reference>
<reference key="2">
    <citation type="journal article" date="2016" name="Elife">
        <title>An effector of the Irish potato famine pathogen antagonizes a host autophagy cargo receptor.</title>
        <authorList>
            <person name="Dagdas Y.F."/>
            <person name="Belhaj K."/>
            <person name="Maqbool A."/>
            <person name="Chaparro-Garcia A."/>
            <person name="Pandey P."/>
            <person name="Petre B."/>
            <person name="Tabassum N."/>
            <person name="Cruz-Mireles N."/>
            <person name="Hughes R.K."/>
            <person name="Sklenar J."/>
            <person name="Win J."/>
            <person name="Menke F."/>
            <person name="Findlay K."/>
            <person name="Banfield M.J."/>
            <person name="Kamoun S."/>
            <person name="Bozkurt T.O."/>
        </authorList>
    </citation>
    <scope>INTERACTION WITH HOST ATG8CL</scope>
    <scope>FUNCTION</scope>
    <scope>DOMAIN</scope>
    <scope>SUBCELLULAR LOCATION</scope>
</reference>
<reference key="3">
    <citation type="journal article" date="2018" name="Elife">
        <title>Host autophagy machinery is diverted to the pathogen interface to mediate focal defense responses against the Irish potato famine pathogen.</title>
        <authorList>
            <person name="Dagdas Y.F."/>
            <person name="Pandey P."/>
            <person name="Tumtas Y."/>
            <person name="Sanguankiattichai N."/>
            <person name="Belhaj K."/>
            <person name="Duggan C."/>
            <person name="Leary A.Y."/>
            <person name="Segretin M.E."/>
            <person name="Contreras M.P."/>
            <person name="Savage Z."/>
            <person name="Khandare V.S."/>
            <person name="Kamoun S."/>
            <person name="Bozkurt T.O."/>
        </authorList>
    </citation>
    <scope>FUNCTION</scope>
    <scope>SUBCELLULAR LOCATION</scope>
</reference>
<reference key="4">
    <citation type="journal article" date="2017" name="BMC Genomics">
        <title>RNA-seq of life stages of the oomycete Phytophthora infestans reveals dynamic changes in metabolic, signal transduction, and pathogenesis genes and a major role for calcium signaling in development.</title>
        <authorList>
            <person name="Ah-Fong A.M."/>
            <person name="Kim K.S."/>
            <person name="Judelson H.S."/>
        </authorList>
    </citation>
    <scope>INDUCTION</scope>
</reference>
<reference key="5">
    <citation type="journal article" date="2017" name="Front. Plant Sci.">
        <title>Conserved RXLR effector genes of Phytophthora infestans expressed at the early stage of potato infection are suppressive to host defense.</title>
        <authorList>
            <person name="Yin J."/>
            <person name="Gu B."/>
            <person name="Huang G."/>
            <person name="Tian Y."/>
            <person name="Quan J."/>
            <person name="Lindqvist-Kreuze H."/>
            <person name="Shan W."/>
        </authorList>
    </citation>
    <scope>INDUCTION</scope>
</reference>
<reference key="6">
    <citation type="journal article" date="2016" name="J. Biol. Chem.">
        <title>Structural basis of host autophagy-related protein 8 (ATG8) binding by the Irish potato famine pathogen effector protein PexRD54.</title>
        <authorList>
            <person name="Maqbool A."/>
            <person name="Hughes R.K."/>
            <person name="Dagdas Y.F."/>
            <person name="Tregidgo N."/>
            <person name="Zess E."/>
            <person name="Belhaj K."/>
            <person name="Round A."/>
            <person name="Bozkurt T.O."/>
            <person name="Kamoun S."/>
            <person name="Banfield M.J."/>
        </authorList>
    </citation>
    <scope>X-RAY CRYSTALLOGRAPHY (2.90 ANGSTROMS) OF 92-381 IN COMPLEX WITH ATG8CL</scope>
    <scope>INTERACTION WITH HOST ATG8CL</scope>
    <scope>MUTAGENESIS OF TRP-378; GLU-379 AND VAL-381</scope>
</reference>
<organism>
    <name type="scientific">Phytophthora infestans (strain T30-4)</name>
    <name type="common">Potato late blight agent</name>
    <dbReference type="NCBI Taxonomy" id="403677"/>
    <lineage>
        <taxon>Eukaryota</taxon>
        <taxon>Sar</taxon>
        <taxon>Stramenopiles</taxon>
        <taxon>Oomycota</taxon>
        <taxon>Peronosporales</taxon>
        <taxon>Peronosporaceae</taxon>
        <taxon>Phytophthora</taxon>
    </lineage>
</organism>
<comment type="function">
    <text evidence="2 6">Effector that specifically binds host autophagy protein ATG8CL of the ATG8 family to stimulate autophagosome formation and subsequent autophagy rather than blocking autophagic flux (PubMed:26765567, PubMed:29932422). The pathogen remodels host-microbe interface by co-opting the host autophagy machinery which plays a key role in plant immunity (PubMed:29932422). PexRD54 competes with the autophagy cargo receptor Joka2 to deplete it out of ATG8CL complexes and interferes with Joka2's positive effect on pathogen defense (PubMed:26765567, PubMed:29932422).</text>
</comment>
<comment type="subunit">
    <text evidence="2 3">Interacts via its C-terminal AIM with host ATG8CL.</text>
</comment>
<comment type="subcellular location">
    <subcellularLocation>
        <location evidence="2">Secreted</location>
    </subcellularLocation>
    <subcellularLocation>
        <location evidence="2">Host nucleus</location>
    </subcellularLocation>
    <subcellularLocation>
        <location evidence="2">Host cytoplasm</location>
    </subcellularLocation>
    <text evidence="6">Localizes to host autophagosomes across the perimicrobial membrane.</text>
</comment>
<comment type="induction">
    <text evidence="4 5">Expression is induced during host plant infection.</text>
</comment>
<comment type="domain">
    <text evidence="9">The RxLR-dEER motif acts to carry the protein into the host cell cytoplasm through binding to cell surface phosphatidylinositol-3-phosphate.</text>
</comment>
<comment type="domain">
    <text evidence="2 3">The C-terminal ATG8 interacting motif (AIM) is necessary and sufficient to bind ATG8CL and localize to host autophagosomes.</text>
</comment>
<comment type="domain">
    <text evidence="10">Contains 5 tandem repeated WY-domains dispensable for the interaction with ATG8CL and which function has still to be determined.</text>
</comment>
<comment type="similarity">
    <text evidence="8">Belongs to the RxLR effector family.</text>
</comment>
<comment type="online information" name="Protein Spotlight">
    <link uri="https://www.proteinspotlight.org/back_issues/214/"/>
    <text>Twisting fate - Issue 214 of May 2019</text>
</comment>
<feature type="signal peptide" evidence="1">
    <location>
        <begin position="1"/>
        <end position="19"/>
    </location>
</feature>
<feature type="chain" id="PRO_5003012478" description="RxLR effector protein 54">
    <location>
        <begin position="20"/>
        <end position="381"/>
    </location>
</feature>
<feature type="region of interest" description="WY-domain 1" evidence="10">
    <location>
        <begin position="97"/>
        <end position="150"/>
    </location>
</feature>
<feature type="region of interest" description="WY-domain 2" evidence="10">
    <location>
        <begin position="151"/>
        <end position="198"/>
    </location>
</feature>
<feature type="region of interest" description="WY-domain 3" evidence="10">
    <location>
        <begin position="199"/>
        <end position="247"/>
    </location>
</feature>
<feature type="region of interest" description="WY-domain 4" evidence="10">
    <location>
        <begin position="251"/>
        <end position="299"/>
    </location>
</feature>
<feature type="region of interest" description="WY-domain 5" evidence="10">
    <location>
        <begin position="302"/>
        <end position="354"/>
    </location>
</feature>
<feature type="short sequence motif" description="RxLR-dEER" evidence="9">
    <location>
        <begin position="57"/>
        <end position="75"/>
    </location>
</feature>
<feature type="short sequence motif" description="ATG8 interacting motif" evidence="9 10">
    <location>
        <begin position="372"/>
        <end position="381"/>
    </location>
</feature>
<feature type="mutagenesis site" description="Impairs the interaction with ATG8CL." evidence="3">
    <original>W</original>
    <variation>A</variation>
    <variation>V</variation>
    <variation>T</variation>
    <variation>S</variation>
    <variation>R</variation>
    <variation>Q</variation>
    <variation>P</variation>
    <variation>N</variation>
    <variation>M</variation>
    <variation>K</variation>
    <variation>H</variation>
    <variation>G</variation>
    <variation>E</variation>
    <variation>D</variation>
    <variation>C</variation>
    <location>
        <position position="378"/>
    </location>
</feature>
<feature type="mutagenesis site" description="Impairs the interaction with ATG8CL." evidence="3">
    <original>E</original>
    <variation>P</variation>
    <location>
        <position position="379"/>
    </location>
</feature>
<feature type="mutagenesis site" description="Impairs the interaction with ATG8CL." evidence="3">
    <original>V</original>
    <variation>A</variation>
    <variation>W</variation>
    <variation>S</variation>
    <variation>R</variation>
    <variation>Q</variation>
    <variation>P</variation>
    <variation>N</variation>
    <variation>M</variation>
    <variation>K</variation>
    <variation>H</variation>
    <variation>G</variation>
    <variation>F</variation>
    <variation>E</variation>
    <variation>D</variation>
    <variation>C</variation>
    <location>
        <position position="381"/>
    </location>
</feature>
<feature type="helix" evidence="11">
    <location>
        <begin position="98"/>
        <end position="109"/>
    </location>
</feature>
<feature type="helix" evidence="11">
    <location>
        <begin position="113"/>
        <end position="119"/>
    </location>
</feature>
<feature type="helix" evidence="11">
    <location>
        <begin position="122"/>
        <end position="124"/>
    </location>
</feature>
<feature type="helix" evidence="11">
    <location>
        <begin position="133"/>
        <end position="149"/>
    </location>
</feature>
<feature type="helix" evidence="11">
    <location>
        <begin position="151"/>
        <end position="154"/>
    </location>
</feature>
<feature type="helix" evidence="11">
    <location>
        <begin position="156"/>
        <end position="164"/>
    </location>
</feature>
<feature type="helix" evidence="11">
    <location>
        <begin position="169"/>
        <end position="180"/>
    </location>
</feature>
<feature type="turn" evidence="11">
    <location>
        <begin position="183"/>
        <end position="185"/>
    </location>
</feature>
<feature type="helix" evidence="11">
    <location>
        <begin position="186"/>
        <end position="195"/>
    </location>
</feature>
<feature type="helix" evidence="11">
    <location>
        <begin position="201"/>
        <end position="207"/>
    </location>
</feature>
<feature type="helix" evidence="11">
    <location>
        <begin position="211"/>
        <end position="217"/>
    </location>
</feature>
<feature type="helix" evidence="11">
    <location>
        <begin position="220"/>
        <end position="229"/>
    </location>
</feature>
<feature type="helix" evidence="11">
    <location>
        <begin position="231"/>
        <end position="244"/>
    </location>
</feature>
<feature type="helix" evidence="11">
    <location>
        <begin position="254"/>
        <end position="262"/>
    </location>
</feature>
<feature type="helix" evidence="11">
    <location>
        <begin position="268"/>
        <end position="278"/>
    </location>
</feature>
<feature type="turn" evidence="11">
    <location>
        <begin position="282"/>
        <end position="284"/>
    </location>
</feature>
<feature type="helix" evidence="11">
    <location>
        <begin position="285"/>
        <end position="296"/>
    </location>
</feature>
<feature type="helix" evidence="11">
    <location>
        <begin position="302"/>
        <end position="312"/>
    </location>
</feature>
<feature type="helix" evidence="11">
    <location>
        <begin position="317"/>
        <end position="324"/>
    </location>
</feature>
<feature type="turn" evidence="11">
    <location>
        <begin position="325"/>
        <end position="327"/>
    </location>
</feature>
<feature type="helix" evidence="11">
    <location>
        <begin position="338"/>
        <end position="353"/>
    </location>
</feature>
<feature type="strand" evidence="11">
    <location>
        <begin position="356"/>
        <end position="358"/>
    </location>
</feature>
<feature type="helix" evidence="11">
    <location>
        <begin position="361"/>
        <end position="368"/>
    </location>
</feature>
<keyword id="KW-0002">3D-structure</keyword>
<keyword id="KW-1035">Host cytoplasm</keyword>
<keyword id="KW-1048">Host nucleus</keyword>
<keyword id="KW-1185">Reference proteome</keyword>
<keyword id="KW-0677">Repeat</keyword>
<keyword id="KW-0964">Secreted</keyword>
<keyword id="KW-0732">Signal</keyword>
<keyword id="KW-0843">Virulence</keyword>
<accession>D0NBE6</accession>
<sequence length="381" mass="43859">MRFQSIMMLTITCAGTCLAEGLAPSDQAYRPTMTGLKSRLNDPRPLSTATIATSSERFLRFDTVARDTAGNDEERVGPSWLAKVDGLMHKMVTSSLSAEEAQLKVWIQSQIHPRELFGVLSLGKRAAKLDDNPDFVQWLRLVKDFRANNGNQAFSDLDIYYLLLKTNSPEQLKLLFETLRHTPGMTKIGASMEKSLSGNWIRKALEQDTYPTIVYNTLRLKDAGTKLDDTPMFRQWLEYVEKYWNKNAGAFFGDTQMLTLFQKTMTEEEDIIKLVHMLRNNPGMKSHADKLERYLLLTSESSHKTMADVWLKARETPEEVFRILRLAEKQTAAADDNRMLNLWLRYTQTYRDKIDKNAFSDAEALQFFRKAKPLDFDWEIV</sequence>
<name>RD54_PHYIT</name>